<proteinExistence type="evidence at transcript level"/>
<keyword id="KW-0106">Calcium</keyword>
<keyword id="KW-0479">Metal-binding</keyword>
<keyword id="KW-0514">Muscle protein</keyword>
<keyword id="KW-0597">Phosphoprotein</keyword>
<keyword id="KW-1185">Reference proteome</keyword>
<keyword id="KW-0677">Repeat</keyword>
<reference key="1">
    <citation type="journal article" date="1995" name="Brain Res. Mol. Brain Res.">
        <title>Molecular cloning and expression of alpha parvalbumin in the guinea pig cochlea.</title>
        <authorList>
            <person name="Soto-Prior A."/>
            <person name="Cluzel M."/>
            <person name="Renard N."/>
            <person name="Ripoll C."/>
            <person name="Lavigne-Rebillard M."/>
            <person name="Eybalin M."/>
            <person name="Hamel C.P."/>
        </authorList>
    </citation>
    <scope>NUCLEOTIDE SEQUENCE [MRNA]</scope>
    <source>
        <tissue>Cochlea</tissue>
    </source>
</reference>
<protein>
    <recommendedName>
        <fullName>Parvalbumin alpha</fullName>
    </recommendedName>
    <alternativeName>
        <fullName evidence="5">Alpha-parvalbumin</fullName>
        <shortName evidence="5">Alpha-PV</shortName>
    </alternativeName>
</protein>
<organism>
    <name type="scientific">Cavia porcellus</name>
    <name type="common">Guinea pig</name>
    <dbReference type="NCBI Taxonomy" id="10141"/>
    <lineage>
        <taxon>Eukaryota</taxon>
        <taxon>Metazoa</taxon>
        <taxon>Chordata</taxon>
        <taxon>Craniata</taxon>
        <taxon>Vertebrata</taxon>
        <taxon>Euteleostomi</taxon>
        <taxon>Mammalia</taxon>
        <taxon>Eutheria</taxon>
        <taxon>Euarchontoglires</taxon>
        <taxon>Glires</taxon>
        <taxon>Rodentia</taxon>
        <taxon>Hystricomorpha</taxon>
        <taxon>Caviidae</taxon>
        <taxon>Cavia</taxon>
    </lineage>
</organism>
<gene>
    <name type="primary">PVALB</name>
</gene>
<sequence>LLNAEDIKKAVGACAAAESFDHKKFFQMVGLKKKNREEVKMVFQILDKDKSGFIEEEELKFILKGFSADARDLSDTETKRMMAAGDKDGDGKIGA</sequence>
<evidence type="ECO:0000250" key="1">
    <source>
        <dbReference type="UniProtKB" id="P02624"/>
    </source>
</evidence>
<evidence type="ECO:0000250" key="2">
    <source>
        <dbReference type="UniProtKB" id="P02625"/>
    </source>
</evidence>
<evidence type="ECO:0000250" key="3">
    <source>
        <dbReference type="UniProtKB" id="P20472"/>
    </source>
</evidence>
<evidence type="ECO:0000255" key="4">
    <source>
        <dbReference type="PROSITE-ProRule" id="PRU00448"/>
    </source>
</evidence>
<evidence type="ECO:0000305" key="5"/>
<name>PRVA_CAVPO</name>
<dbReference type="EMBL" id="U26677">
    <property type="protein sequence ID" value="AAC52499.1"/>
    <property type="molecule type" value="mRNA"/>
</dbReference>
<dbReference type="SMR" id="P51434"/>
<dbReference type="FunCoup" id="P51434">
    <property type="interactions" value="11"/>
</dbReference>
<dbReference type="STRING" id="10141.ENSCPOP00000019473"/>
<dbReference type="eggNOG" id="KOG0027">
    <property type="taxonomic scope" value="Eukaryota"/>
</dbReference>
<dbReference type="InParanoid" id="P51434"/>
<dbReference type="Proteomes" id="UP000005447">
    <property type="component" value="Unassembled WGS sequence"/>
</dbReference>
<dbReference type="GO" id="GO:0005737">
    <property type="term" value="C:cytoplasm"/>
    <property type="evidence" value="ECO:0007669"/>
    <property type="project" value="TreeGrafter"/>
</dbReference>
<dbReference type="GO" id="GO:0005509">
    <property type="term" value="F:calcium ion binding"/>
    <property type="evidence" value="ECO:0007669"/>
    <property type="project" value="InterPro"/>
</dbReference>
<dbReference type="FunFam" id="1.10.238.10:FF:000060">
    <property type="entry name" value="Parvalbumin, thymic"/>
    <property type="match status" value="1"/>
</dbReference>
<dbReference type="Gene3D" id="1.10.238.10">
    <property type="entry name" value="EF-hand"/>
    <property type="match status" value="1"/>
</dbReference>
<dbReference type="InterPro" id="IPR011992">
    <property type="entry name" value="EF-hand-dom_pair"/>
</dbReference>
<dbReference type="InterPro" id="IPR018247">
    <property type="entry name" value="EF_Hand_1_Ca_BS"/>
</dbReference>
<dbReference type="InterPro" id="IPR002048">
    <property type="entry name" value="EF_hand_dom"/>
</dbReference>
<dbReference type="InterPro" id="IPR008080">
    <property type="entry name" value="Parvalbumin"/>
</dbReference>
<dbReference type="PANTHER" id="PTHR11653">
    <property type="entry name" value="PARVALBUMIN ALPHA"/>
    <property type="match status" value="1"/>
</dbReference>
<dbReference type="PANTHER" id="PTHR11653:SF2">
    <property type="entry name" value="PARVALBUMIN ALPHA"/>
    <property type="match status" value="1"/>
</dbReference>
<dbReference type="Pfam" id="PF13499">
    <property type="entry name" value="EF-hand_7"/>
    <property type="match status" value="1"/>
</dbReference>
<dbReference type="PRINTS" id="PR01697">
    <property type="entry name" value="PARVALBUMIN"/>
</dbReference>
<dbReference type="SMART" id="SM00054">
    <property type="entry name" value="EFh"/>
    <property type="match status" value="1"/>
</dbReference>
<dbReference type="SUPFAM" id="SSF47473">
    <property type="entry name" value="EF-hand"/>
    <property type="match status" value="1"/>
</dbReference>
<dbReference type="PROSITE" id="PS00018">
    <property type="entry name" value="EF_HAND_1"/>
    <property type="match status" value="1"/>
</dbReference>
<dbReference type="PROSITE" id="PS50222">
    <property type="entry name" value="EF_HAND_2"/>
    <property type="match status" value="2"/>
</dbReference>
<comment type="function">
    <text evidence="1 2">In muscle, parvalbumin is thought to be involved in relaxation after contraction (By similarity). It binds two calcium ions (By similarity).</text>
</comment>
<comment type="domain">
    <text evidence="2">AB domain, comprising of helices A and B, is involved in structural stabilization, protecting the hydrophobic core of the protein. It is required for high-affinity binding of Ca(2+) and for Mg(2+)-binding.</text>
</comment>
<comment type="similarity">
    <text evidence="5">Belongs to the parvalbumin family.</text>
</comment>
<feature type="chain" id="PRO_0000073585" description="Parvalbumin alpha">
    <location>
        <begin position="1" status="less than"/>
        <end position="95" status="greater than"/>
    </location>
</feature>
<feature type="domain" description="EF-hand 1" evidence="4">
    <location>
        <begin position="34"/>
        <end position="69"/>
    </location>
</feature>
<feature type="domain" description="EF-hand 2" evidence="4">
    <location>
        <begin position="73"/>
        <end position="95" status="greater than"/>
    </location>
</feature>
<feature type="binding site" evidence="4">
    <location>
        <position position="47"/>
    </location>
    <ligand>
        <name>Ca(2+)</name>
        <dbReference type="ChEBI" id="CHEBI:29108"/>
        <label>1</label>
    </ligand>
</feature>
<feature type="binding site" evidence="4">
    <location>
        <position position="49"/>
    </location>
    <ligand>
        <name>Ca(2+)</name>
        <dbReference type="ChEBI" id="CHEBI:29108"/>
        <label>1</label>
    </ligand>
</feature>
<feature type="binding site" evidence="4">
    <location>
        <position position="51"/>
    </location>
    <ligand>
        <name>Ca(2+)</name>
        <dbReference type="ChEBI" id="CHEBI:29108"/>
        <label>1</label>
    </ligand>
</feature>
<feature type="binding site" evidence="2">
    <location>
        <position position="53"/>
    </location>
    <ligand>
        <name>Ca(2+)</name>
        <dbReference type="ChEBI" id="CHEBI:29108"/>
        <label>1</label>
    </ligand>
</feature>
<feature type="binding site" evidence="2">
    <location>
        <position position="55"/>
    </location>
    <ligand>
        <name>Ca(2+)</name>
        <dbReference type="ChEBI" id="CHEBI:29108"/>
        <label>1</label>
    </ligand>
</feature>
<feature type="binding site" evidence="4">
    <location>
        <position position="58"/>
    </location>
    <ligand>
        <name>Ca(2+)</name>
        <dbReference type="ChEBI" id="CHEBI:29108"/>
        <label>1</label>
    </ligand>
</feature>
<feature type="binding site" evidence="3">
    <location>
        <position position="86"/>
    </location>
    <ligand>
        <name>Ca(2+)</name>
        <dbReference type="ChEBI" id="CHEBI:29108"/>
        <label>2</label>
    </ligand>
</feature>
<feature type="binding site" evidence="3">
    <location>
        <position position="88"/>
    </location>
    <ligand>
        <name>Ca(2+)</name>
        <dbReference type="ChEBI" id="CHEBI:29108"/>
        <label>2</label>
    </ligand>
</feature>
<feature type="binding site" evidence="3">
    <location>
        <position position="90"/>
    </location>
    <ligand>
        <name>Ca(2+)</name>
        <dbReference type="ChEBI" id="CHEBI:29108"/>
        <label>2</label>
    </ligand>
</feature>
<feature type="binding site" evidence="3">
    <location>
        <position position="92"/>
    </location>
    <ligand>
        <name>Ca(2+)</name>
        <dbReference type="ChEBI" id="CHEBI:29108"/>
        <label>2</label>
    </ligand>
</feature>
<feature type="modified residue" description="Phosphoserine" evidence="2">
    <location>
        <position position="19"/>
    </location>
</feature>
<feature type="non-terminal residue">
    <location>
        <position position="1"/>
    </location>
</feature>
<feature type="non-terminal residue">
    <location>
        <position position="95"/>
    </location>
</feature>
<accession>P51434</accession>